<feature type="chain" id="PRO_0000265972" description="Homeobox protein Hox-A11b">
    <location>
        <begin position="1"/>
        <end position="284"/>
    </location>
</feature>
<feature type="DNA-binding region" description="Homeobox" evidence="2">
    <location>
        <begin position="212"/>
        <end position="271"/>
    </location>
</feature>
<feature type="region of interest" description="Disordered" evidence="3">
    <location>
        <begin position="93"/>
        <end position="134"/>
    </location>
</feature>
<feature type="region of interest" description="Disordered" evidence="3">
    <location>
        <begin position="155"/>
        <end position="217"/>
    </location>
</feature>
<feature type="compositionally biased region" description="Gly residues" evidence="3">
    <location>
        <begin position="110"/>
        <end position="121"/>
    </location>
</feature>
<feature type="compositionally biased region" description="Polar residues" evidence="3">
    <location>
        <begin position="174"/>
        <end position="197"/>
    </location>
</feature>
<name>HXABB_TAKRU</name>
<accession>Q1KKZ5</accession>
<reference key="1">
    <citation type="journal article" date="2006" name="Proc. Natl. Acad. Sci. U.S.A.">
        <title>Highly conserved syntenic blocks at the vertebrate Hox loci and conserved regulatory elements within and outside Hox gene clusters.</title>
        <authorList>
            <person name="Lee A.P."/>
            <person name="Koh E.G.L."/>
            <person name="Tay A."/>
            <person name="Brenner S."/>
            <person name="Venkatesh B."/>
        </authorList>
    </citation>
    <scope>NUCLEOTIDE SEQUENCE [GENOMIC DNA]</scope>
</reference>
<proteinExistence type="inferred from homology"/>
<sequence length="284" mass="31454">MDFDERITASNMYLPSCTYYVSGADFSGLPHYLTQNQSTCPMTYPYQSTALPQVPSVRDVAFRDYGIDTSNKWHHSRGSLSHCYTEDIVHRDGWTSPTPRGGEILVKGSSSGGGGGGGGHPGSSNHTPGFYGSVGRNGVLPQAFDQFFDTAYGSSEGSATPTAHAADADRQAAKTSPASAQAGSDSAESFSPKSSSGHSEEKQSRGSGGQRARKKRCPYTKYQIRELEREFFFSVYINKEKRLQLSRMLNLTDRQVKIWFQNRRMKEKKLNRDRLQYFTANPLL</sequence>
<comment type="function">
    <text evidence="1">Sequence-specific transcription factor which is part of a developmental regulatory system that provides cells with specific positional identities on the anterior-posterior axis.</text>
</comment>
<comment type="subcellular location">
    <subcellularLocation>
        <location evidence="2">Nucleus</location>
    </subcellularLocation>
</comment>
<comment type="similarity">
    <text evidence="4">Belongs to the Abd-B homeobox family.</text>
</comment>
<evidence type="ECO:0000250" key="1"/>
<evidence type="ECO:0000255" key="2">
    <source>
        <dbReference type="PROSITE-ProRule" id="PRU00108"/>
    </source>
</evidence>
<evidence type="ECO:0000256" key="3">
    <source>
        <dbReference type="SAM" id="MobiDB-lite"/>
    </source>
</evidence>
<evidence type="ECO:0000305" key="4"/>
<gene>
    <name type="primary">hoxa11b</name>
</gene>
<keyword id="KW-0217">Developmental protein</keyword>
<keyword id="KW-0238">DNA-binding</keyword>
<keyword id="KW-0371">Homeobox</keyword>
<keyword id="KW-0539">Nucleus</keyword>
<keyword id="KW-1185">Reference proteome</keyword>
<keyword id="KW-0804">Transcription</keyword>
<keyword id="KW-0805">Transcription regulation</keyword>
<organism>
    <name type="scientific">Takifugu rubripes</name>
    <name type="common">Japanese pufferfish</name>
    <name type="synonym">Fugu rubripes</name>
    <dbReference type="NCBI Taxonomy" id="31033"/>
    <lineage>
        <taxon>Eukaryota</taxon>
        <taxon>Metazoa</taxon>
        <taxon>Chordata</taxon>
        <taxon>Craniata</taxon>
        <taxon>Vertebrata</taxon>
        <taxon>Euteleostomi</taxon>
        <taxon>Actinopterygii</taxon>
        <taxon>Neopterygii</taxon>
        <taxon>Teleostei</taxon>
        <taxon>Neoteleostei</taxon>
        <taxon>Acanthomorphata</taxon>
        <taxon>Eupercaria</taxon>
        <taxon>Tetraodontiformes</taxon>
        <taxon>Tetradontoidea</taxon>
        <taxon>Tetraodontidae</taxon>
        <taxon>Takifugu</taxon>
    </lineage>
</organism>
<dbReference type="EMBL" id="DQ481664">
    <property type="protein sequence ID" value="ABF22399.1"/>
    <property type="molecule type" value="Genomic_DNA"/>
</dbReference>
<dbReference type="RefSeq" id="XP_003966153.1">
    <property type="nucleotide sequence ID" value="XM_003966104.1"/>
</dbReference>
<dbReference type="SMR" id="Q1KKZ5"/>
<dbReference type="STRING" id="31033.ENSTRUP00000075108"/>
<dbReference type="GeneID" id="101079822"/>
<dbReference type="KEGG" id="tru:101079822"/>
<dbReference type="CTD" id="30382"/>
<dbReference type="InParanoid" id="Q1KKZ5"/>
<dbReference type="OrthoDB" id="6159439at2759"/>
<dbReference type="Proteomes" id="UP000005226">
    <property type="component" value="Unplaced"/>
</dbReference>
<dbReference type="GO" id="GO:0005654">
    <property type="term" value="C:nucleoplasm"/>
    <property type="evidence" value="ECO:0007669"/>
    <property type="project" value="UniProtKB-ARBA"/>
</dbReference>
<dbReference type="GO" id="GO:0000981">
    <property type="term" value="F:DNA-binding transcription factor activity, RNA polymerase II-specific"/>
    <property type="evidence" value="ECO:0007669"/>
    <property type="project" value="InterPro"/>
</dbReference>
<dbReference type="GO" id="GO:0000978">
    <property type="term" value="F:RNA polymerase II cis-regulatory region sequence-specific DNA binding"/>
    <property type="evidence" value="ECO:0007669"/>
    <property type="project" value="TreeGrafter"/>
</dbReference>
<dbReference type="CDD" id="cd00086">
    <property type="entry name" value="homeodomain"/>
    <property type="match status" value="1"/>
</dbReference>
<dbReference type="FunFam" id="1.10.10.60:FF:000166">
    <property type="entry name" value="homeobox protein Hox-C11"/>
    <property type="match status" value="1"/>
</dbReference>
<dbReference type="Gene3D" id="1.10.10.60">
    <property type="entry name" value="Homeodomain-like"/>
    <property type="match status" value="1"/>
</dbReference>
<dbReference type="InterPro" id="IPR021918">
    <property type="entry name" value="DUF3528"/>
</dbReference>
<dbReference type="InterPro" id="IPR001356">
    <property type="entry name" value="HD"/>
</dbReference>
<dbReference type="InterPro" id="IPR020479">
    <property type="entry name" value="HD_metazoa"/>
</dbReference>
<dbReference type="InterPro" id="IPR017970">
    <property type="entry name" value="Homeobox_CS"/>
</dbReference>
<dbReference type="InterPro" id="IPR009057">
    <property type="entry name" value="Homeodomain-like_sf"/>
</dbReference>
<dbReference type="PANTHER" id="PTHR46092:SF3">
    <property type="entry name" value="HOMEOBOX PROTEIN HOX-A11"/>
    <property type="match status" value="1"/>
</dbReference>
<dbReference type="PANTHER" id="PTHR46092">
    <property type="entry name" value="HOMEOBOX PROTEIN HOX-A11-RELATED"/>
    <property type="match status" value="1"/>
</dbReference>
<dbReference type="Pfam" id="PF12045">
    <property type="entry name" value="DUF3528"/>
    <property type="match status" value="1"/>
</dbReference>
<dbReference type="Pfam" id="PF00046">
    <property type="entry name" value="Homeodomain"/>
    <property type="match status" value="1"/>
</dbReference>
<dbReference type="PRINTS" id="PR00024">
    <property type="entry name" value="HOMEOBOX"/>
</dbReference>
<dbReference type="SMART" id="SM00389">
    <property type="entry name" value="HOX"/>
    <property type="match status" value="1"/>
</dbReference>
<dbReference type="SUPFAM" id="SSF46689">
    <property type="entry name" value="Homeodomain-like"/>
    <property type="match status" value="1"/>
</dbReference>
<dbReference type="PROSITE" id="PS00027">
    <property type="entry name" value="HOMEOBOX_1"/>
    <property type="match status" value="1"/>
</dbReference>
<dbReference type="PROSITE" id="PS50071">
    <property type="entry name" value="HOMEOBOX_2"/>
    <property type="match status" value="1"/>
</dbReference>
<protein>
    <recommendedName>
        <fullName>Homeobox protein Hox-A11b</fullName>
    </recommendedName>
</protein>